<feature type="chain" id="PRO_0000143836" description="Uridylate kinase">
    <location>
        <begin position="1"/>
        <end position="245"/>
    </location>
</feature>
<feature type="binding site" evidence="1">
    <location>
        <begin position="12"/>
        <end position="15"/>
    </location>
    <ligand>
        <name>ATP</name>
        <dbReference type="ChEBI" id="CHEBI:30616"/>
    </ligand>
</feature>
<feature type="binding site" evidence="1">
    <location>
        <position position="55"/>
    </location>
    <ligand>
        <name>UMP</name>
        <dbReference type="ChEBI" id="CHEBI:57865"/>
    </ligand>
</feature>
<feature type="binding site" evidence="1">
    <location>
        <position position="56"/>
    </location>
    <ligand>
        <name>ATP</name>
        <dbReference type="ChEBI" id="CHEBI:30616"/>
    </ligand>
</feature>
<feature type="binding site" evidence="1">
    <location>
        <position position="60"/>
    </location>
    <ligand>
        <name>ATP</name>
        <dbReference type="ChEBI" id="CHEBI:30616"/>
    </ligand>
</feature>
<feature type="binding site" evidence="1">
    <location>
        <position position="76"/>
    </location>
    <ligand>
        <name>UMP</name>
        <dbReference type="ChEBI" id="CHEBI:57865"/>
    </ligand>
</feature>
<feature type="binding site" evidence="1">
    <location>
        <begin position="137"/>
        <end position="144"/>
    </location>
    <ligand>
        <name>UMP</name>
        <dbReference type="ChEBI" id="CHEBI:57865"/>
    </ligand>
</feature>
<feature type="binding site" evidence="1">
    <location>
        <position position="164"/>
    </location>
    <ligand>
        <name>ATP</name>
        <dbReference type="ChEBI" id="CHEBI:30616"/>
    </ligand>
</feature>
<feature type="binding site" evidence="1">
    <location>
        <position position="171"/>
    </location>
    <ligand>
        <name>ATP</name>
        <dbReference type="ChEBI" id="CHEBI:30616"/>
    </ligand>
</feature>
<feature type="binding site" evidence="1">
    <location>
        <position position="174"/>
    </location>
    <ligand>
        <name>ATP</name>
        <dbReference type="ChEBI" id="CHEBI:30616"/>
    </ligand>
</feature>
<reference key="1">
    <citation type="journal article" date="1998" name="Science">
        <title>Genome sequence of an obligate intracellular pathogen of humans: Chlamydia trachomatis.</title>
        <authorList>
            <person name="Stephens R.S."/>
            <person name="Kalman S."/>
            <person name="Lammel C.J."/>
            <person name="Fan J."/>
            <person name="Marathe R."/>
            <person name="Aravind L."/>
            <person name="Mitchell W.P."/>
            <person name="Olinger L."/>
            <person name="Tatusov R.L."/>
            <person name="Zhao Q."/>
            <person name="Koonin E.V."/>
            <person name="Davis R.W."/>
        </authorList>
    </citation>
    <scope>NUCLEOTIDE SEQUENCE [LARGE SCALE GENOMIC DNA]</scope>
    <source>
        <strain>ATCC VR-885 / DSM 19411 / UW-3/Cx</strain>
    </source>
</reference>
<accession>O84685</accession>
<keyword id="KW-0067">ATP-binding</keyword>
<keyword id="KW-0963">Cytoplasm</keyword>
<keyword id="KW-0418">Kinase</keyword>
<keyword id="KW-0547">Nucleotide-binding</keyword>
<keyword id="KW-0665">Pyrimidine biosynthesis</keyword>
<keyword id="KW-1185">Reference proteome</keyword>
<keyword id="KW-0808">Transferase</keyword>
<protein>
    <recommendedName>
        <fullName evidence="1">Uridylate kinase</fullName>
        <shortName evidence="1">UK</shortName>
        <ecNumber evidence="1">2.7.4.22</ecNumber>
    </recommendedName>
    <alternativeName>
        <fullName evidence="1">Uridine monophosphate kinase</fullName>
        <shortName evidence="1">UMP kinase</shortName>
        <shortName evidence="1">UMPK</shortName>
    </alternativeName>
</protein>
<comment type="function">
    <text evidence="1">Catalyzes the reversible phosphorylation of UMP to UDP.</text>
</comment>
<comment type="catalytic activity">
    <reaction evidence="1">
        <text>UMP + ATP = UDP + ADP</text>
        <dbReference type="Rhea" id="RHEA:24400"/>
        <dbReference type="ChEBI" id="CHEBI:30616"/>
        <dbReference type="ChEBI" id="CHEBI:57865"/>
        <dbReference type="ChEBI" id="CHEBI:58223"/>
        <dbReference type="ChEBI" id="CHEBI:456216"/>
        <dbReference type="EC" id="2.7.4.22"/>
    </reaction>
</comment>
<comment type="activity regulation">
    <text evidence="1">Inhibited by UTP.</text>
</comment>
<comment type="pathway">
    <text evidence="1">Pyrimidine metabolism; CTP biosynthesis via de novo pathway; UDP from UMP (UMPK route): step 1/1.</text>
</comment>
<comment type="subunit">
    <text evidence="1">Homohexamer.</text>
</comment>
<comment type="subcellular location">
    <subcellularLocation>
        <location evidence="1">Cytoplasm</location>
    </subcellularLocation>
</comment>
<comment type="similarity">
    <text evidence="1">Belongs to the UMP kinase family.</text>
</comment>
<name>PYRH_CHLTR</name>
<dbReference type="EC" id="2.7.4.22" evidence="1"/>
<dbReference type="EMBL" id="AE001273">
    <property type="protein sequence ID" value="AAC68273.1"/>
    <property type="molecule type" value="Genomic_DNA"/>
</dbReference>
<dbReference type="PIR" id="E71484">
    <property type="entry name" value="E71484"/>
</dbReference>
<dbReference type="RefSeq" id="NP_220197.1">
    <property type="nucleotide sequence ID" value="NC_000117.1"/>
</dbReference>
<dbReference type="RefSeq" id="WP_009872051.1">
    <property type="nucleotide sequence ID" value="NC_000117.1"/>
</dbReference>
<dbReference type="SMR" id="O84685"/>
<dbReference type="FunCoup" id="O84685">
    <property type="interactions" value="306"/>
</dbReference>
<dbReference type="STRING" id="272561.CT_678"/>
<dbReference type="EnsemblBacteria" id="AAC68273">
    <property type="protein sequence ID" value="AAC68273"/>
    <property type="gene ID" value="CT_678"/>
</dbReference>
<dbReference type="GeneID" id="884467"/>
<dbReference type="KEGG" id="ctr:CT_678"/>
<dbReference type="PATRIC" id="fig|272561.5.peg.745"/>
<dbReference type="HOGENOM" id="CLU_033861_0_1_0"/>
<dbReference type="InParanoid" id="O84685"/>
<dbReference type="OrthoDB" id="9807458at2"/>
<dbReference type="UniPathway" id="UPA00159">
    <property type="reaction ID" value="UER00275"/>
</dbReference>
<dbReference type="Proteomes" id="UP000000431">
    <property type="component" value="Chromosome"/>
</dbReference>
<dbReference type="GO" id="GO:0005737">
    <property type="term" value="C:cytoplasm"/>
    <property type="evidence" value="ECO:0007669"/>
    <property type="project" value="UniProtKB-SubCell"/>
</dbReference>
<dbReference type="GO" id="GO:0005524">
    <property type="term" value="F:ATP binding"/>
    <property type="evidence" value="ECO:0007669"/>
    <property type="project" value="UniProtKB-KW"/>
</dbReference>
<dbReference type="GO" id="GO:0033862">
    <property type="term" value="F:UMP kinase activity"/>
    <property type="evidence" value="ECO:0000318"/>
    <property type="project" value="GO_Central"/>
</dbReference>
<dbReference type="GO" id="GO:0044210">
    <property type="term" value="P:'de novo' CTP biosynthetic process"/>
    <property type="evidence" value="ECO:0007669"/>
    <property type="project" value="UniProtKB-UniRule"/>
</dbReference>
<dbReference type="GO" id="GO:0006225">
    <property type="term" value="P:UDP biosynthetic process"/>
    <property type="evidence" value="ECO:0000318"/>
    <property type="project" value="GO_Central"/>
</dbReference>
<dbReference type="CDD" id="cd04254">
    <property type="entry name" value="AAK_UMPK-PyrH-Ec"/>
    <property type="match status" value="1"/>
</dbReference>
<dbReference type="FunFam" id="3.40.1160.10:FF:000001">
    <property type="entry name" value="Uridylate kinase"/>
    <property type="match status" value="1"/>
</dbReference>
<dbReference type="Gene3D" id="3.40.1160.10">
    <property type="entry name" value="Acetylglutamate kinase-like"/>
    <property type="match status" value="1"/>
</dbReference>
<dbReference type="HAMAP" id="MF_01220_B">
    <property type="entry name" value="PyrH_B"/>
    <property type="match status" value="1"/>
</dbReference>
<dbReference type="InterPro" id="IPR036393">
    <property type="entry name" value="AceGlu_kinase-like_sf"/>
</dbReference>
<dbReference type="InterPro" id="IPR001048">
    <property type="entry name" value="Asp/Glu/Uridylate_kinase"/>
</dbReference>
<dbReference type="InterPro" id="IPR011817">
    <property type="entry name" value="Uridylate_kinase"/>
</dbReference>
<dbReference type="InterPro" id="IPR015963">
    <property type="entry name" value="Uridylate_kinase_bac"/>
</dbReference>
<dbReference type="NCBIfam" id="TIGR02075">
    <property type="entry name" value="pyrH_bact"/>
    <property type="match status" value="1"/>
</dbReference>
<dbReference type="PANTHER" id="PTHR42833">
    <property type="entry name" value="URIDYLATE KINASE"/>
    <property type="match status" value="1"/>
</dbReference>
<dbReference type="PANTHER" id="PTHR42833:SF4">
    <property type="entry name" value="URIDYLATE KINASE PUMPKIN, CHLOROPLASTIC"/>
    <property type="match status" value="1"/>
</dbReference>
<dbReference type="Pfam" id="PF00696">
    <property type="entry name" value="AA_kinase"/>
    <property type="match status" value="1"/>
</dbReference>
<dbReference type="PIRSF" id="PIRSF005650">
    <property type="entry name" value="Uridylate_kin"/>
    <property type="match status" value="1"/>
</dbReference>
<dbReference type="SUPFAM" id="SSF53633">
    <property type="entry name" value="Carbamate kinase-like"/>
    <property type="match status" value="1"/>
</dbReference>
<evidence type="ECO:0000255" key="1">
    <source>
        <dbReference type="HAMAP-Rule" id="MF_01220"/>
    </source>
</evidence>
<proteinExistence type="inferred from homology"/>
<organism>
    <name type="scientific">Chlamydia trachomatis serovar D (strain ATCC VR-885 / DSM 19411 / UW-3/Cx)</name>
    <dbReference type="NCBI Taxonomy" id="272561"/>
    <lineage>
        <taxon>Bacteria</taxon>
        <taxon>Pseudomonadati</taxon>
        <taxon>Chlamydiota</taxon>
        <taxon>Chlamydiia</taxon>
        <taxon>Chlamydiales</taxon>
        <taxon>Chlamydiaceae</taxon>
        <taxon>Chlamydia/Chlamydophila group</taxon>
        <taxon>Chlamydia</taxon>
    </lineage>
</organism>
<gene>
    <name evidence="1" type="primary">pyrH</name>
    <name type="ordered locus">CT_678</name>
</gene>
<sequence length="245" mass="26235">MMKKRVKRVLFKISGEALSDGDSSNRISEERLSRLIAELKVVRNADVEVALVIGGGNILRGLSQSQSLQINRVSADQMGMLATLINGMALADALKTEDVPNLLTSTLSCPQLAELYNPQKASDALSQGKVVICTMGAGAPYLTTDTGAALRACELKVDVLLKATMHVDGVYDQDPRECADAVRYDHISYRDFLSQGLGAIDPAAISLCMEAGIPIKMFSFARHSLEEAVFNTVGTVISSTEGGQL</sequence>